<proteinExistence type="inferred from homology"/>
<name>NPY1R_CAVPO</name>
<comment type="function">
    <text>Receptor for neuropeptide Y and peptide YY.</text>
</comment>
<comment type="subcellular location">
    <subcellularLocation>
        <location>Cell membrane</location>
        <topology>Multi-pass membrane protein</topology>
    </subcellularLocation>
</comment>
<comment type="similarity">
    <text evidence="4">Belongs to the G-protein coupled receptor 1 family.</text>
</comment>
<organism>
    <name type="scientific">Cavia porcellus</name>
    <name type="common">Guinea pig</name>
    <dbReference type="NCBI Taxonomy" id="10141"/>
    <lineage>
        <taxon>Eukaryota</taxon>
        <taxon>Metazoa</taxon>
        <taxon>Chordata</taxon>
        <taxon>Craniata</taxon>
        <taxon>Vertebrata</taxon>
        <taxon>Euteleostomi</taxon>
        <taxon>Mammalia</taxon>
        <taxon>Eutheria</taxon>
        <taxon>Euarchontoglires</taxon>
        <taxon>Glires</taxon>
        <taxon>Rodentia</taxon>
        <taxon>Hystricomorpha</taxon>
        <taxon>Caviidae</taxon>
        <taxon>Cavia</taxon>
    </lineage>
</organism>
<keyword id="KW-1003">Cell membrane</keyword>
<keyword id="KW-1015">Disulfide bond</keyword>
<keyword id="KW-0297">G-protein coupled receptor</keyword>
<keyword id="KW-0325">Glycoprotein</keyword>
<keyword id="KW-0449">Lipoprotein</keyword>
<keyword id="KW-0472">Membrane</keyword>
<keyword id="KW-0564">Palmitate</keyword>
<keyword id="KW-0597">Phosphoprotein</keyword>
<keyword id="KW-0675">Receptor</keyword>
<keyword id="KW-1185">Reference proteome</keyword>
<keyword id="KW-0807">Transducer</keyword>
<keyword id="KW-0812">Transmembrane</keyword>
<keyword id="KW-1133">Transmembrane helix</keyword>
<reference key="1">
    <citation type="journal article" date="1999" name="Peptides">
        <title>The cloned guinea pig neuropeptide Y receptor Y1 conforms to other mammalian Y1 receptors.</title>
        <authorList>
            <person name="Berglund M.M."/>
            <person name="Holmberg S.K.S."/>
            <person name="Eriksson H."/>
            <person name="Gedda K."/>
            <person name="Maffrand J.-P."/>
            <person name="Serradeil-Le Gal C."/>
            <person name="Chhajlani V."/>
            <person name="Grundemar L."/>
            <person name="Larhammar D."/>
        </authorList>
    </citation>
    <scope>NUCLEOTIDE SEQUENCE [GENOMIC DNA]</scope>
</reference>
<accession>Q9WVD0</accession>
<gene>
    <name type="primary">NPY1R</name>
</gene>
<protein>
    <recommendedName>
        <fullName>Neuropeptide Y receptor type 1</fullName>
        <shortName>NPY1-R</shortName>
    </recommendedName>
</protein>
<feature type="chain" id="PRO_0000069919" description="Neuropeptide Y receptor type 1">
    <location>
        <begin position="1"/>
        <end position="383"/>
    </location>
</feature>
<feature type="topological domain" description="Extracellular" evidence="3">
    <location>
        <begin position="1"/>
        <end position="34"/>
    </location>
</feature>
<feature type="transmembrane region" description="Helical; Name=1" evidence="3">
    <location>
        <begin position="35"/>
        <end position="55"/>
    </location>
</feature>
<feature type="topological domain" description="Cytoplasmic" evidence="3">
    <location>
        <begin position="56"/>
        <end position="87"/>
    </location>
</feature>
<feature type="transmembrane region" description="Helical; Name=2" evidence="3">
    <location>
        <begin position="88"/>
        <end position="108"/>
    </location>
</feature>
<feature type="topological domain" description="Extracellular" evidence="3">
    <location>
        <begin position="109"/>
        <end position="116"/>
    </location>
</feature>
<feature type="transmembrane region" description="Helical; Name=3" evidence="3">
    <location>
        <begin position="117"/>
        <end position="137"/>
    </location>
</feature>
<feature type="topological domain" description="Cytoplasmic" evidence="3">
    <location>
        <begin position="138"/>
        <end position="154"/>
    </location>
</feature>
<feature type="transmembrane region" description="Helical; Name=4" evidence="3">
    <location>
        <begin position="155"/>
        <end position="175"/>
    </location>
</feature>
<feature type="topological domain" description="Extracellular" evidence="3">
    <location>
        <begin position="176"/>
        <end position="211"/>
    </location>
</feature>
<feature type="transmembrane region" description="Helical; Name=5" evidence="3">
    <location>
        <begin position="212"/>
        <end position="232"/>
    </location>
</feature>
<feature type="topological domain" description="Cytoplasmic" evidence="3">
    <location>
        <begin position="233"/>
        <end position="260"/>
    </location>
</feature>
<feature type="transmembrane region" description="Helical; Name=6" evidence="3">
    <location>
        <begin position="261"/>
        <end position="281"/>
    </location>
</feature>
<feature type="topological domain" description="Extracellular" evidence="3">
    <location>
        <begin position="282"/>
        <end position="299"/>
    </location>
</feature>
<feature type="transmembrane region" description="Helical; Name=7" evidence="3">
    <location>
        <begin position="300"/>
        <end position="320"/>
    </location>
</feature>
<feature type="topological domain" description="Cytoplasmic" evidence="3">
    <location>
        <begin position="321"/>
        <end position="383"/>
    </location>
</feature>
<feature type="modified residue" description="Phosphoserine" evidence="1">
    <location>
        <position position="368"/>
    </location>
</feature>
<feature type="modified residue" description="Phosphoserine" evidence="2">
    <location>
        <position position="376"/>
    </location>
</feature>
<feature type="lipid moiety-binding region" description="S-palmitoyl cysteine" evidence="3">
    <location>
        <position position="338"/>
    </location>
</feature>
<feature type="glycosylation site" description="N-linked (GlcNAc...) asparagine" evidence="3">
    <location>
        <position position="2"/>
    </location>
</feature>
<feature type="glycosylation site" description="N-linked (GlcNAc...) asparagine" evidence="3">
    <location>
        <position position="11"/>
    </location>
</feature>
<feature type="glycosylation site" description="N-linked (GlcNAc...) asparagine" evidence="3">
    <location>
        <position position="17"/>
    </location>
</feature>
<feature type="disulfide bond" evidence="4">
    <location>
        <begin position="113"/>
        <end position="198"/>
    </location>
</feature>
<dbReference type="EMBL" id="AF135061">
    <property type="protein sequence ID" value="AAD43060.1"/>
    <property type="molecule type" value="Genomic_DNA"/>
</dbReference>
<dbReference type="RefSeq" id="XP_003479697.2">
    <property type="nucleotide sequence ID" value="XM_003479649.3"/>
</dbReference>
<dbReference type="SMR" id="Q9WVD0"/>
<dbReference type="FunCoup" id="Q9WVD0">
    <property type="interactions" value="701"/>
</dbReference>
<dbReference type="STRING" id="10141.ENSCPOP00000032835"/>
<dbReference type="BindingDB" id="Q9WVD0"/>
<dbReference type="GlyCosmos" id="Q9WVD0">
    <property type="glycosylation" value="3 sites, No reported glycans"/>
</dbReference>
<dbReference type="GeneID" id="100724720"/>
<dbReference type="KEGG" id="cpoc:100724720"/>
<dbReference type="CTD" id="4886"/>
<dbReference type="eggNOG" id="KOG3656">
    <property type="taxonomic scope" value="Eukaryota"/>
</dbReference>
<dbReference type="InParanoid" id="Q9WVD0"/>
<dbReference type="Proteomes" id="UP000005447">
    <property type="component" value="Unassembled WGS sequence"/>
</dbReference>
<dbReference type="GO" id="GO:0043005">
    <property type="term" value="C:neuron projection"/>
    <property type="evidence" value="ECO:0007669"/>
    <property type="project" value="TreeGrafter"/>
</dbReference>
<dbReference type="GO" id="GO:0005886">
    <property type="term" value="C:plasma membrane"/>
    <property type="evidence" value="ECO:0007669"/>
    <property type="project" value="UniProtKB-SubCell"/>
</dbReference>
<dbReference type="GO" id="GO:0042923">
    <property type="term" value="F:neuropeptide binding"/>
    <property type="evidence" value="ECO:0007669"/>
    <property type="project" value="TreeGrafter"/>
</dbReference>
<dbReference type="GO" id="GO:0004983">
    <property type="term" value="F:neuropeptide Y receptor activity"/>
    <property type="evidence" value="ECO:0007669"/>
    <property type="project" value="InterPro"/>
</dbReference>
<dbReference type="CDD" id="cd15395">
    <property type="entry name" value="7tmA_NPY1R"/>
    <property type="match status" value="1"/>
</dbReference>
<dbReference type="FunFam" id="1.20.1070.10:FF:000062">
    <property type="entry name" value="Neuropeptide Y receptor type 1"/>
    <property type="match status" value="1"/>
</dbReference>
<dbReference type="Gene3D" id="1.20.1070.10">
    <property type="entry name" value="Rhodopsin 7-helix transmembrane proteins"/>
    <property type="match status" value="1"/>
</dbReference>
<dbReference type="InterPro" id="IPR000276">
    <property type="entry name" value="GPCR_Rhodpsn"/>
</dbReference>
<dbReference type="InterPro" id="IPR017452">
    <property type="entry name" value="GPCR_Rhodpsn_7TM"/>
</dbReference>
<dbReference type="InterPro" id="IPR000351">
    <property type="entry name" value="NPY1_rcpt"/>
</dbReference>
<dbReference type="InterPro" id="IPR000611">
    <property type="entry name" value="NPY_rcpt"/>
</dbReference>
<dbReference type="PANTHER" id="PTHR24235">
    <property type="entry name" value="NEUROPEPTIDE Y RECEPTOR"/>
    <property type="match status" value="1"/>
</dbReference>
<dbReference type="PANTHER" id="PTHR24235:SF24">
    <property type="entry name" value="NEUROPEPTIDE Y RECEPTOR TYPE 1"/>
    <property type="match status" value="1"/>
</dbReference>
<dbReference type="Pfam" id="PF00001">
    <property type="entry name" value="7tm_1"/>
    <property type="match status" value="1"/>
</dbReference>
<dbReference type="PRINTS" id="PR00237">
    <property type="entry name" value="GPCRRHODOPSN"/>
</dbReference>
<dbReference type="PRINTS" id="PR01013">
    <property type="entry name" value="NRPEPTIDEY1R"/>
</dbReference>
<dbReference type="PRINTS" id="PR01012">
    <property type="entry name" value="NRPEPTIDEYR"/>
</dbReference>
<dbReference type="SUPFAM" id="SSF81321">
    <property type="entry name" value="Family A G protein-coupled receptor-like"/>
    <property type="match status" value="1"/>
</dbReference>
<dbReference type="PROSITE" id="PS00237">
    <property type="entry name" value="G_PROTEIN_RECEP_F1_1"/>
    <property type="match status" value="1"/>
</dbReference>
<dbReference type="PROSITE" id="PS50262">
    <property type="entry name" value="G_PROTEIN_RECEP_F1_2"/>
    <property type="match status" value="1"/>
</dbReference>
<sequence>MNSTSFSQLENHSVHYNLSEEKPSFFAFENDDCHLPLAVIFTLALAYGAVIILGVSGNLALILIILKQKEMRNVTNILIVNLSFSDLLVAIMCLPFTFVYTLMDHWIFGEIMCKLNPFVQCVSITVSIFSLVLIAVERHQLIINPRGWRPNNRHAYIGIAVIWVLAVASSLPFMIYQVLTDEPFQNVTLDAFKDKLVCFDQFPSDSHRLSYTTLLLVLQYFGPLCFIFICYFKIYIRLKRRNNMMDKMRDSKYRSSESKRINIMLLSIVVAFAVCWLPLTIFNTVFDWNHQIIATCNHNLLFLLCHLTAMISTCVNPIFYGFLNKNFQRDLQFFFNFCDFRSRDDDYETIAMSTMHTDVSKTSLKQASPLAFKKISCVENEKI</sequence>
<evidence type="ECO:0000250" key="1">
    <source>
        <dbReference type="UniProtKB" id="P21555"/>
    </source>
</evidence>
<evidence type="ECO:0000250" key="2">
    <source>
        <dbReference type="UniProtKB" id="Q04573"/>
    </source>
</evidence>
<evidence type="ECO:0000255" key="3"/>
<evidence type="ECO:0000255" key="4">
    <source>
        <dbReference type="PROSITE-ProRule" id="PRU00521"/>
    </source>
</evidence>